<name>ODO2_DELAC</name>
<comment type="function">
    <text evidence="2">E2 component of the 2-oxoglutarate dehydrogenase (OGDH) complex which catalyzes the second step in the conversion of 2-oxoglutarate to succinyl-CoA and CO(2).</text>
</comment>
<comment type="catalytic activity">
    <reaction evidence="2">
        <text>N(6)-[(R)-dihydrolipoyl]-L-lysyl-[protein] + succinyl-CoA = N(6)-[(R)-S(8)-succinyldihydrolipoyl]-L-lysyl-[protein] + CoA</text>
        <dbReference type="Rhea" id="RHEA:15213"/>
        <dbReference type="Rhea" id="RHEA-COMP:10475"/>
        <dbReference type="Rhea" id="RHEA-COMP:20092"/>
        <dbReference type="ChEBI" id="CHEBI:57287"/>
        <dbReference type="ChEBI" id="CHEBI:57292"/>
        <dbReference type="ChEBI" id="CHEBI:83100"/>
        <dbReference type="ChEBI" id="CHEBI:83120"/>
        <dbReference type="EC" id="2.3.1.61"/>
    </reaction>
</comment>
<comment type="cofactor">
    <cofactor evidence="1">
        <name>(R)-lipoate</name>
        <dbReference type="ChEBI" id="CHEBI:83088"/>
    </cofactor>
    <text evidence="1">Binds 1 lipoyl cofactor covalently.</text>
</comment>
<comment type="pathway">
    <text>Amino-acid degradation; L-lysine degradation via saccharopine pathway; glutaryl-CoA from L-lysine: step 6/6.</text>
</comment>
<comment type="subunit">
    <text evidence="2">Forms a 24-polypeptide structural core with octahedral symmetry. Part of the 2-oxoglutarate dehydrogenase (OGDH) complex composed of E1 (2-oxoglutarate dehydrogenase), E2 (dihydrolipoamide succinyltransferase) and E3 (dihydrolipoamide dehydrogenase); the complex contains multiple copies of the three enzymatic components (E1, E2 and E3).</text>
</comment>
<comment type="induction">
    <text evidence="3">By 2,4-dichlorophenol.</text>
</comment>
<comment type="similarity">
    <text evidence="4">Belongs to the 2-oxoacid dehydrogenase family.</text>
</comment>
<reference key="1">
    <citation type="journal article" date="2004" name="Microbiology">
        <title>Regulation of catabolic enzymes during long-term exposure of Delftia acidovorans MC1 to chlorophenoxy herbicides.</title>
        <authorList>
            <person name="Benndorf D."/>
            <person name="Davidson I."/>
            <person name="Babel W."/>
        </authorList>
    </citation>
    <scope>PROTEIN SEQUENCE</scope>
    <scope>INDUCTION BY 2,4-DICHLOROPHENOL</scope>
    <source>
        <strain>MC1</strain>
    </source>
</reference>
<feature type="chain" id="PRO_0000162254" description="Dihydrolipoyllysine-residue succinyltransferase component of 2-oxoglutarate dehydrogenase complex">
    <location>
        <begin position="1"/>
        <end position="12" status="greater than"/>
    </location>
</feature>
<feature type="domain" description="Lipoyl-binding">
    <location>
        <begin position="1"/>
        <end position="12" status="greater than"/>
    </location>
</feature>
<feature type="non-terminal residue" evidence="4">
    <location>
        <position position="12"/>
    </location>
</feature>
<proteinExistence type="evidence at protein level"/>
<keyword id="KW-0012">Acyltransferase</keyword>
<keyword id="KW-0903">Direct protein sequencing</keyword>
<keyword id="KW-0450">Lipoyl</keyword>
<keyword id="KW-0808">Transferase</keyword>
<keyword id="KW-0816">Tricarboxylic acid cycle</keyword>
<gene>
    <name type="primary">sucB</name>
</gene>
<accession>P83708</accession>
<evidence type="ECO:0000250" key="1"/>
<evidence type="ECO:0000250" key="2">
    <source>
        <dbReference type="UniProtKB" id="P0AFG6"/>
    </source>
</evidence>
<evidence type="ECO:0000269" key="3">
    <source>
    </source>
</evidence>
<evidence type="ECO:0000305" key="4"/>
<organism evidence="4">
    <name type="scientific">Delftia acidovorans</name>
    <name type="common">Pseudomonas acidovorans</name>
    <name type="synonym">Comamonas acidovorans</name>
    <dbReference type="NCBI Taxonomy" id="80866"/>
    <lineage>
        <taxon>Bacteria</taxon>
        <taxon>Pseudomonadati</taxon>
        <taxon>Pseudomonadota</taxon>
        <taxon>Betaproteobacteria</taxon>
        <taxon>Burkholderiales</taxon>
        <taxon>Comamonadaceae</taxon>
        <taxon>Delftia</taxon>
    </lineage>
</organism>
<sequence length="12" mass="1319">AIVEVKVPXLXE</sequence>
<dbReference type="EC" id="2.3.1.61" evidence="2"/>
<dbReference type="UniPathway" id="UPA00868">
    <property type="reaction ID" value="UER00840"/>
</dbReference>
<dbReference type="GO" id="GO:0004149">
    <property type="term" value="F:dihydrolipoyllysine-residue succinyltransferase activity"/>
    <property type="evidence" value="ECO:0007669"/>
    <property type="project" value="UniProtKB-EC"/>
</dbReference>
<dbReference type="GO" id="GO:0033512">
    <property type="term" value="P:L-lysine catabolic process to acetyl-CoA via saccharopine"/>
    <property type="evidence" value="ECO:0007669"/>
    <property type="project" value="UniProtKB-UniPathway"/>
</dbReference>
<dbReference type="GO" id="GO:0006099">
    <property type="term" value="P:tricarboxylic acid cycle"/>
    <property type="evidence" value="ECO:0007669"/>
    <property type="project" value="UniProtKB-KW"/>
</dbReference>
<protein>
    <recommendedName>
        <fullName>Dihydrolipoyllysine-residue succinyltransferase component of 2-oxoglutarate dehydrogenase complex</fullName>
        <ecNumber evidence="2">2.3.1.61</ecNumber>
    </recommendedName>
    <alternativeName>
        <fullName>2-oxoglutarate dehydrogenase complex component E2</fullName>
        <shortName>OGDC-E2</shortName>
    </alternativeName>
    <alternativeName>
        <fullName>Dihydrolipoamide succinyltransferase component of 2-oxoglutarate dehydrogenase complex</fullName>
    </alternativeName>
</protein>